<organismHost>
    <name type="scientific">Homo sapiens</name>
    <name type="common">Human</name>
    <dbReference type="NCBI Taxonomy" id="9606"/>
</organismHost>
<comment type="function">
    <text evidence="2">Prevents premature death of the host cell during virus production, which would otherwise reduce the amount of progeny virus. Acts as a host B-cell leukemia/lymphoma 2 (Bcl-2) homolog, and interacts with pro-apoptotic proteins to prevent mitochondria permeabilization, release of cytochrome c and subsequent apoptosis of the host cell. In addition, plays a role in the inhibiton of host BECN1-mediated starvation-induced autophagy without affecting basal levels of autophagy.</text>
</comment>
<comment type="subunit">
    <text evidence="2">Interacts with isoform 1 of host VRK2; this interaction is involved in protecting cells from apoptosis. Interacts with host PRA1; this interaction seems to modulate BHRF1 anti-apoptotic activity. Interacts with host BCL2L11. Interacts with host BAD and BBC3. Interacts with BALF1; BALF1 acting as a negative regulator of the survival function of BHRF1. Interacts with host BECN1.</text>
</comment>
<comment type="subcellular location">
    <subcellularLocation>
        <location evidence="2">Host membrane</location>
        <topology evidence="2">Single-pass membrane protein</topology>
    </subcellularLocation>
    <subcellularLocation>
        <location evidence="2">Host mitochondrion</location>
    </subcellularLocation>
    <text evidence="2">also observed in the perinuclear region of the cell.</text>
</comment>
<comment type="miscellaneous">
    <text>EA-R is part of the restricted EA-complex.</text>
</comment>
<comment type="similarity">
    <text evidence="4">Belongs to the Bcl-2 family.</text>
</comment>
<protein>
    <recommendedName>
        <fullName>Apoptosis regulator BHRF1</fullName>
    </recommendedName>
    <alternativeName>
        <fullName>Early antigen protein R</fullName>
        <shortName>EA-R</shortName>
    </alternativeName>
    <alternativeName>
        <fullName>Nuclear antigen</fullName>
    </alternativeName>
</protein>
<sequence>MAYSTREILLALCIRDSRVHGNGTLHPVLELAARETPLRLSPEDTVVLRYHVLLEEIIERNSETFTETWNRFITHTEHVDLDFNSVFLEIFHRGDPSLGRALAWMAWCMHACRTLCCNQSTPYYVVDLSVRGMLEASEGLDGWIHQQGGWSTLIEDNIPGSRRFSWTLFLAGLTLSLLVICSYLFISRGRH</sequence>
<keyword id="KW-0002">3D-structure</keyword>
<keyword id="KW-0053">Apoptosis</keyword>
<keyword id="KW-0244">Early protein</keyword>
<keyword id="KW-0325">Glycoprotein</keyword>
<keyword id="KW-1043">Host membrane</keyword>
<keyword id="KW-1045">Host mitochondrion</keyword>
<keyword id="KW-0945">Host-virus interaction</keyword>
<keyword id="KW-1081">Inhibition of host apoptosis by viral BCL2-like protein</keyword>
<keyword id="KW-1083">Inhibition of host autophagy by virus</keyword>
<keyword id="KW-0472">Membrane</keyword>
<keyword id="KW-1119">Modulation of host cell apoptosis by virus</keyword>
<keyword id="KW-1185">Reference proteome</keyword>
<keyword id="KW-0812">Transmembrane</keyword>
<keyword id="KW-1133">Transmembrane helix</keyword>
<dbReference type="EMBL" id="DQ279927">
    <property type="protein sequence ID" value="ABB89223.1"/>
    <property type="molecule type" value="Genomic_DNA"/>
</dbReference>
<dbReference type="RefSeq" id="YP_001129442.1">
    <property type="nucleotide sequence ID" value="NC_009334.1"/>
</dbReference>
<dbReference type="RefSeq" id="YP_401646.1">
    <property type="nucleotide sequence ID" value="NC_007605.1"/>
</dbReference>
<dbReference type="PDB" id="2WH6">
    <property type="method" value="X-ray"/>
    <property type="resolution" value="1.50 A"/>
    <property type="chains" value="A=1-160"/>
</dbReference>
<dbReference type="PDB" id="4OYD">
    <property type="method" value="X-ray"/>
    <property type="resolution" value="1.80 A"/>
    <property type="chains" value="A/C=2-158"/>
</dbReference>
<dbReference type="PDBsum" id="2WH6"/>
<dbReference type="PDBsum" id="4OYD"/>
<dbReference type="BMRB" id="P0C6Z1"/>
<dbReference type="SMR" id="P0C6Z1"/>
<dbReference type="DNASU" id="3783706"/>
<dbReference type="GeneID" id="3783706"/>
<dbReference type="KEGG" id="vg:3783706"/>
<dbReference type="KEGG" id="vg:5176205"/>
<dbReference type="EvolutionaryTrace" id="P0C6Z1"/>
<dbReference type="Proteomes" id="UP000007639">
    <property type="component" value="Genome"/>
</dbReference>
<dbReference type="GO" id="GO:0033644">
    <property type="term" value="C:host cell membrane"/>
    <property type="evidence" value="ECO:0007669"/>
    <property type="project" value="UniProtKB-SubCell"/>
</dbReference>
<dbReference type="GO" id="GO:0033650">
    <property type="term" value="C:host cell mitochondrion"/>
    <property type="evidence" value="ECO:0007669"/>
    <property type="project" value="UniProtKB-SubCell"/>
</dbReference>
<dbReference type="GO" id="GO:0016020">
    <property type="term" value="C:membrane"/>
    <property type="evidence" value="ECO:0007669"/>
    <property type="project" value="UniProtKB-KW"/>
</dbReference>
<dbReference type="GO" id="GO:0042981">
    <property type="term" value="P:regulation of apoptotic process"/>
    <property type="evidence" value="ECO:0007669"/>
    <property type="project" value="InterPro"/>
</dbReference>
<dbReference type="GO" id="GO:0033668">
    <property type="term" value="P:symbiont-mediated suppression of host apoptosis"/>
    <property type="evidence" value="ECO:0007669"/>
    <property type="project" value="UniProtKB-KW"/>
</dbReference>
<dbReference type="GO" id="GO:0140321">
    <property type="term" value="P:symbiont-mediated suppression of host autophagy"/>
    <property type="evidence" value="ECO:0007669"/>
    <property type="project" value="UniProtKB-KW"/>
</dbReference>
<dbReference type="Gene3D" id="1.10.437.10">
    <property type="entry name" value="Blc2-like"/>
    <property type="match status" value="1"/>
</dbReference>
<dbReference type="InterPro" id="IPR036834">
    <property type="entry name" value="Bcl-2-like_sf"/>
</dbReference>
<dbReference type="InterPro" id="IPR046371">
    <property type="entry name" value="Bcl-2_BH1-3"/>
</dbReference>
<dbReference type="InterPro" id="IPR002475">
    <property type="entry name" value="Bcl2-like"/>
</dbReference>
<dbReference type="InterPro" id="IPR020726">
    <property type="entry name" value="Bcl2_BH2_motif_CS"/>
</dbReference>
<dbReference type="Pfam" id="PF00452">
    <property type="entry name" value="Bcl-2"/>
    <property type="match status" value="1"/>
</dbReference>
<dbReference type="SUPFAM" id="SSF56854">
    <property type="entry name" value="Bcl-2 inhibitors of programmed cell death"/>
    <property type="match status" value="1"/>
</dbReference>
<dbReference type="PROSITE" id="PS50062">
    <property type="entry name" value="BCL2_FAMILY"/>
    <property type="match status" value="1"/>
</dbReference>
<dbReference type="PROSITE" id="PS01258">
    <property type="entry name" value="BH2"/>
    <property type="match status" value="1"/>
</dbReference>
<name>EAR_EBVA8</name>
<feature type="chain" id="PRO_0000375928" description="Apoptosis regulator BHRF1">
    <location>
        <begin position="1"/>
        <end position="191"/>
    </location>
</feature>
<feature type="transmembrane region" description="Helical" evidence="3">
    <location>
        <begin position="166"/>
        <end position="186"/>
    </location>
</feature>
<feature type="region of interest" description="Interaction with host VRK2" evidence="1">
    <location>
        <begin position="1"/>
        <end position="18"/>
    </location>
</feature>
<feature type="region of interest" description="Interaction with host VRK2" evidence="1">
    <location>
        <begin position="89"/>
        <end position="142"/>
    </location>
</feature>
<feature type="short sequence motif" description="BH1">
    <location>
        <begin position="89"/>
        <end position="109"/>
    </location>
</feature>
<feature type="short sequence motif" description="BH2">
    <location>
        <begin position="142"/>
        <end position="157"/>
    </location>
</feature>
<feature type="glycosylation site" description="N-linked (GlcNAc...) asparagine; by host" evidence="3">
    <location>
        <position position="22"/>
    </location>
</feature>
<feature type="glycosylation site" description="N-linked (GlcNAc...) asparagine; by host" evidence="3">
    <location>
        <position position="118"/>
    </location>
</feature>
<feature type="helix" evidence="5">
    <location>
        <begin position="5"/>
        <end position="18"/>
    </location>
</feature>
<feature type="helix" evidence="5">
    <location>
        <begin position="27"/>
        <end position="35"/>
    </location>
</feature>
<feature type="helix" evidence="5">
    <location>
        <begin position="45"/>
        <end position="60"/>
    </location>
</feature>
<feature type="helix" evidence="5">
    <location>
        <begin position="62"/>
        <end position="75"/>
    </location>
</feature>
<feature type="helix" evidence="5">
    <location>
        <begin position="79"/>
        <end position="91"/>
    </location>
</feature>
<feature type="strand" evidence="5">
    <location>
        <begin position="92"/>
        <end position="94"/>
    </location>
</feature>
<feature type="helix" evidence="5">
    <location>
        <begin position="98"/>
        <end position="117"/>
    </location>
</feature>
<feature type="helix" evidence="5">
    <location>
        <begin position="123"/>
        <end position="137"/>
    </location>
</feature>
<feature type="helix" evidence="5">
    <location>
        <begin position="138"/>
        <end position="140"/>
    </location>
</feature>
<feature type="helix" evidence="5">
    <location>
        <begin position="141"/>
        <end position="146"/>
    </location>
</feature>
<feature type="helix" evidence="5">
    <location>
        <begin position="149"/>
        <end position="156"/>
    </location>
</feature>
<proteinExistence type="evidence at protein level"/>
<evidence type="ECO:0000250" key="1"/>
<evidence type="ECO:0000250" key="2">
    <source>
        <dbReference type="UniProtKB" id="P03182"/>
    </source>
</evidence>
<evidence type="ECO:0000255" key="3"/>
<evidence type="ECO:0000305" key="4"/>
<evidence type="ECO:0007829" key="5">
    <source>
        <dbReference type="PDB" id="2WH6"/>
    </source>
</evidence>
<reference key="1">
    <citation type="journal article" date="2006" name="Virology">
        <title>The genome of Epstein-Barr virus type 2 strain AG876.</title>
        <authorList>
            <person name="Dolan A."/>
            <person name="Addison C."/>
            <person name="Gatherer D."/>
            <person name="Davison A.J."/>
            <person name="McGeoch D.J."/>
        </authorList>
    </citation>
    <scope>NUCLEOTIDE SEQUENCE [LARGE SCALE GENOMIC DNA]</scope>
</reference>
<gene>
    <name type="ORF">BHRF1</name>
</gene>
<organism>
    <name type="scientific">Epstein-Barr virus (strain AG876)</name>
    <name type="common">HHV-4</name>
    <name type="synonym">Human herpesvirus 4</name>
    <dbReference type="NCBI Taxonomy" id="82830"/>
    <lineage>
        <taxon>Viruses</taxon>
        <taxon>Duplodnaviria</taxon>
        <taxon>Heunggongvirae</taxon>
        <taxon>Peploviricota</taxon>
        <taxon>Herviviricetes</taxon>
        <taxon>Herpesvirales</taxon>
        <taxon>Orthoherpesviridae</taxon>
        <taxon>Gammaherpesvirinae</taxon>
        <taxon>Lymphocryptovirus</taxon>
        <taxon>Lymphocryptovirus humangamma4</taxon>
        <taxon>Epstein-Barr virus (strain GD1)</taxon>
    </lineage>
</organism>
<accession>P0C6Z1</accession>
<accession>Q777H0</accession>